<feature type="chain" id="PRO_0000287241" description="Heterogeneous nuclear ribonucleoprotein D-like">
    <location>
        <begin position="1"/>
        <end position="322"/>
    </location>
</feature>
<feature type="domain" description="RRM 1" evidence="4">
    <location>
        <begin position="51"/>
        <end position="133"/>
    </location>
</feature>
<feature type="domain" description="RRM 2" evidence="4">
    <location>
        <begin position="136"/>
        <end position="215"/>
    </location>
</feature>
<feature type="region of interest" description="Disordered" evidence="5">
    <location>
        <begin position="1"/>
        <end position="36"/>
    </location>
</feature>
<feature type="region of interest" description="Disordered" evidence="5">
    <location>
        <begin position="216"/>
        <end position="251"/>
    </location>
</feature>
<feature type="region of interest" description="Necessary for interaction with TNPO1" evidence="1">
    <location>
        <begin position="245"/>
        <end position="322"/>
    </location>
</feature>
<feature type="region of interest" description="Disordered" evidence="5">
    <location>
        <begin position="299"/>
        <end position="322"/>
    </location>
</feature>
<feature type="compositionally biased region" description="Low complexity" evidence="5">
    <location>
        <begin position="14"/>
        <end position="36"/>
    </location>
</feature>
<feature type="compositionally biased region" description="Gly residues" evidence="5">
    <location>
        <begin position="226"/>
        <end position="245"/>
    </location>
</feature>
<feature type="modified residue" description="Omega-N-methylarginine" evidence="2">
    <location>
        <position position="6"/>
    </location>
</feature>
<feature type="modified residue" description="N6-methyllysine" evidence="2">
    <location>
        <position position="64"/>
    </location>
</feature>
<feature type="modified residue" description="N6-acetyllysine" evidence="2">
    <location>
        <position position="119"/>
    </location>
</feature>
<feature type="modified residue" description="Phosphoserine" evidence="6">
    <location>
        <position position="144"/>
    </location>
</feature>
<feature type="modified residue" description="Dimethylated arginine; alternate" evidence="2">
    <location>
        <position position="310"/>
    </location>
</feature>
<feature type="modified residue" description="Omega-N-methylarginine; alternate" evidence="3">
    <location>
        <position position="310"/>
    </location>
</feature>
<feature type="cross-link" description="Glycyl lysine isopeptide (Lys-Gly) (interchain with G-Cter in SUMO2)" evidence="2">
    <location>
        <position position="112"/>
    </location>
</feature>
<comment type="function">
    <text evidence="1">Acts as a transcriptional regulator. Promotes transcription repression. Promotes transcription activation in differentiated myotubes. Binds to double- and single-stranded DNA sequences. Binds to the transcription suppressor CATR sequence of the COX5B promoter. Binds with high affinity to RNA molecules that contain AU-rich elements (AREs) found within the 3'-UTR of many proto-oncogenes and cytokine mRNAs. Binds both to nuclear and cytoplasmic poly(A) mRNAs. Binds to poly(G) and poly(A), but not to poly(U) or poly(C) RNA homopolymers. Binds to the 5'-ACUAGC-3' RNA consensus sequence (By similarity).</text>
</comment>
<comment type="subunit">
    <text evidence="1">Interacts with TNPO1 and ZNF148.</text>
</comment>
<comment type="subcellular location">
    <subcellularLocation>
        <location evidence="2">Nucleus</location>
    </subcellularLocation>
    <subcellularLocation>
        <location evidence="2">Cytoplasm</location>
    </subcellularLocation>
    <text evidence="2">Shuttles between the nucleus and the cytoplasm in a TNPO1-dependent manner.</text>
</comment>
<comment type="PTM">
    <text evidence="1">Dimethylation of Arg-310 is probably of the asymmetric type.</text>
</comment>
<protein>
    <recommendedName>
        <fullName>Heterogeneous nuclear ribonucleoprotein D-like</fullName>
        <shortName>hnRNP D-like</shortName>
        <shortName>hnRNP DL</shortName>
    </recommendedName>
</protein>
<gene>
    <name type="primary">Hnrnpdl</name>
    <name type="synonym">Hnrpdl</name>
</gene>
<dbReference type="EMBL" id="BC104683">
    <property type="protein sequence ID" value="AAI04684.1"/>
    <property type="molecule type" value="mRNA"/>
</dbReference>
<dbReference type="RefSeq" id="NP_001028868.1">
    <property type="nucleotide sequence ID" value="NM_001033696.2"/>
</dbReference>
<dbReference type="RefSeq" id="NP_001388377.1">
    <property type="nucleotide sequence ID" value="NM_001401448.1"/>
</dbReference>
<dbReference type="SMR" id="Q3SWU3"/>
<dbReference type="BioGRID" id="258094">
    <property type="interactions" value="4"/>
</dbReference>
<dbReference type="FunCoup" id="Q3SWU3">
    <property type="interactions" value="3456"/>
</dbReference>
<dbReference type="IntAct" id="Q3SWU3">
    <property type="interactions" value="1"/>
</dbReference>
<dbReference type="MINT" id="Q3SWU3"/>
<dbReference type="STRING" id="10116.ENSRNOP00000075589"/>
<dbReference type="iPTMnet" id="Q3SWU3"/>
<dbReference type="PhosphoSitePlus" id="Q3SWU3"/>
<dbReference type="jPOST" id="Q3SWU3"/>
<dbReference type="PaxDb" id="10116-ENSRNOP00000003106"/>
<dbReference type="Ensembl" id="ENSRNOT00000003106.7">
    <property type="protein sequence ID" value="ENSRNOP00000003106.5"/>
    <property type="gene ID" value="ENSRNOG00000002270.8"/>
</dbReference>
<dbReference type="GeneID" id="305178"/>
<dbReference type="KEGG" id="rno:305178"/>
<dbReference type="AGR" id="RGD:1309950"/>
<dbReference type="CTD" id="9987"/>
<dbReference type="RGD" id="1309950">
    <property type="gene designation" value="Hnrnpdl"/>
</dbReference>
<dbReference type="eggNOG" id="KOG0118">
    <property type="taxonomic scope" value="Eukaryota"/>
</dbReference>
<dbReference type="GeneTree" id="ENSGT00940000154426"/>
<dbReference type="HOGENOM" id="CLU_012062_1_1_1"/>
<dbReference type="InParanoid" id="Q3SWU3"/>
<dbReference type="OMA" id="QVDTEMN"/>
<dbReference type="PRO" id="PR:Q3SWU3"/>
<dbReference type="Proteomes" id="UP000002494">
    <property type="component" value="Chromosome 14"/>
</dbReference>
<dbReference type="Bgee" id="ENSRNOG00000002270">
    <property type="expression patterns" value="Expressed in thymus and 19 other cell types or tissues"/>
</dbReference>
<dbReference type="ExpressionAtlas" id="Q3SWU3">
    <property type="expression patterns" value="baseline and differential"/>
</dbReference>
<dbReference type="GO" id="GO:0000785">
    <property type="term" value="C:chromatin"/>
    <property type="evidence" value="ECO:0000318"/>
    <property type="project" value="GO_Central"/>
</dbReference>
<dbReference type="GO" id="GO:0005737">
    <property type="term" value="C:cytoplasm"/>
    <property type="evidence" value="ECO:0007669"/>
    <property type="project" value="UniProtKB-SubCell"/>
</dbReference>
<dbReference type="GO" id="GO:0005654">
    <property type="term" value="C:nucleoplasm"/>
    <property type="evidence" value="ECO:0000318"/>
    <property type="project" value="GO_Central"/>
</dbReference>
<dbReference type="GO" id="GO:0005634">
    <property type="term" value="C:nucleus"/>
    <property type="evidence" value="ECO:0000266"/>
    <property type="project" value="RGD"/>
</dbReference>
<dbReference type="GO" id="GO:0045202">
    <property type="term" value="C:synapse"/>
    <property type="evidence" value="ECO:0000266"/>
    <property type="project" value="RGD"/>
</dbReference>
<dbReference type="GO" id="GO:0003677">
    <property type="term" value="F:DNA binding"/>
    <property type="evidence" value="ECO:0007669"/>
    <property type="project" value="UniProtKB-KW"/>
</dbReference>
<dbReference type="GO" id="GO:0003723">
    <property type="term" value="F:RNA binding"/>
    <property type="evidence" value="ECO:0000318"/>
    <property type="project" value="GO_Central"/>
</dbReference>
<dbReference type="GO" id="GO:0010468">
    <property type="term" value="P:regulation of gene expression"/>
    <property type="evidence" value="ECO:0000318"/>
    <property type="project" value="GO_Central"/>
</dbReference>
<dbReference type="CDD" id="cd12758">
    <property type="entry name" value="RRM1_hnRPDL"/>
    <property type="match status" value="1"/>
</dbReference>
<dbReference type="CDD" id="cd12585">
    <property type="entry name" value="RRM2_hnRPDL"/>
    <property type="match status" value="1"/>
</dbReference>
<dbReference type="FunFam" id="3.30.70.330:FF:000220">
    <property type="entry name" value="Heterogeneous nuclear ribonucleoprotein D-like protein"/>
    <property type="match status" value="1"/>
</dbReference>
<dbReference type="FunFam" id="3.30.70.330:FF:000030">
    <property type="entry name" value="Heterogeneous nuclear ribonucleoprotein d0 isoform"/>
    <property type="match status" value="1"/>
</dbReference>
<dbReference type="Gene3D" id="3.30.70.330">
    <property type="match status" value="2"/>
</dbReference>
<dbReference type="InterPro" id="IPR034847">
    <property type="entry name" value="hnRPDL_RRM1"/>
</dbReference>
<dbReference type="InterPro" id="IPR012677">
    <property type="entry name" value="Nucleotide-bd_a/b_plait_sf"/>
</dbReference>
<dbReference type="InterPro" id="IPR035979">
    <property type="entry name" value="RBD_domain_sf"/>
</dbReference>
<dbReference type="InterPro" id="IPR000504">
    <property type="entry name" value="RRM_dom"/>
</dbReference>
<dbReference type="PANTHER" id="PTHR48033:SF2">
    <property type="entry name" value="HETEROGENEOUS NUCLEAR RIBONUCLEOPROTEIN D-LIKE"/>
    <property type="match status" value="1"/>
</dbReference>
<dbReference type="PANTHER" id="PTHR48033">
    <property type="entry name" value="RNA-BINDING (RRM/RBD/RNP MOTIFS) FAMILY PROTEIN"/>
    <property type="match status" value="1"/>
</dbReference>
<dbReference type="Pfam" id="PF00076">
    <property type="entry name" value="RRM_1"/>
    <property type="match status" value="2"/>
</dbReference>
<dbReference type="SMART" id="SM00360">
    <property type="entry name" value="RRM"/>
    <property type="match status" value="2"/>
</dbReference>
<dbReference type="SUPFAM" id="SSF54928">
    <property type="entry name" value="RNA-binding domain, RBD"/>
    <property type="match status" value="2"/>
</dbReference>
<dbReference type="PROSITE" id="PS50102">
    <property type="entry name" value="RRM"/>
    <property type="match status" value="2"/>
</dbReference>
<keyword id="KW-0007">Acetylation</keyword>
<keyword id="KW-0010">Activator</keyword>
<keyword id="KW-0963">Cytoplasm</keyword>
<keyword id="KW-0238">DNA-binding</keyword>
<keyword id="KW-1017">Isopeptide bond</keyword>
<keyword id="KW-0488">Methylation</keyword>
<keyword id="KW-0539">Nucleus</keyword>
<keyword id="KW-0597">Phosphoprotein</keyword>
<keyword id="KW-1185">Reference proteome</keyword>
<keyword id="KW-0677">Repeat</keyword>
<keyword id="KW-0678">Repressor</keyword>
<keyword id="KW-0694">RNA-binding</keyword>
<keyword id="KW-0804">Transcription</keyword>
<keyword id="KW-0805">Transcription regulation</keyword>
<keyword id="KW-0832">Ubl conjugation</keyword>
<organism>
    <name type="scientific">Rattus norvegicus</name>
    <name type="common">Rat</name>
    <dbReference type="NCBI Taxonomy" id="10116"/>
    <lineage>
        <taxon>Eukaryota</taxon>
        <taxon>Metazoa</taxon>
        <taxon>Chordata</taxon>
        <taxon>Craniata</taxon>
        <taxon>Vertebrata</taxon>
        <taxon>Euteleostomi</taxon>
        <taxon>Mammalia</taxon>
        <taxon>Eutheria</taxon>
        <taxon>Euarchontoglires</taxon>
        <taxon>Glires</taxon>
        <taxon>Rodentia</taxon>
        <taxon>Myomorpha</taxon>
        <taxon>Muroidea</taxon>
        <taxon>Muridae</taxon>
        <taxon>Murinae</taxon>
        <taxon>Rattus</taxon>
    </lineage>
</organism>
<name>HNRDL_RAT</name>
<sequence>MTGTARSALPLPQSPARALRPSGAARAAPSLSPSRFSACPLDPSSFPTSGNKMFIGGLSWDTSKKDLTEYLSRFGEVVDCTIKTDPVTGRSRGFGFVLFKDAASVDKVLELKEHKLDGKLIDPKRAKALKGKEPPKKVFVGGLSPDTSEEQIKEYFGAFGEIENIELPMDTKTNERRGFCFITYTDEEPVKKLLESRYHQIGSGKCEIKVAQPKEVYRQQQQQQKGGRGAAAGGRGGARGRGRGQGQNWNQGFNNYYDQGYGNYNSAYGDESYSGYGGYDYTGYNYGSYGYGQGYTDYSGQQSTYGKASRGGGNHQNNYQPY</sequence>
<proteinExistence type="evidence at protein level"/>
<evidence type="ECO:0000250" key="1"/>
<evidence type="ECO:0000250" key="2">
    <source>
        <dbReference type="UniProtKB" id="O14979"/>
    </source>
</evidence>
<evidence type="ECO:0000250" key="3">
    <source>
        <dbReference type="UniProtKB" id="Q9Z130"/>
    </source>
</evidence>
<evidence type="ECO:0000255" key="4">
    <source>
        <dbReference type="PROSITE-ProRule" id="PRU00176"/>
    </source>
</evidence>
<evidence type="ECO:0000256" key="5">
    <source>
        <dbReference type="SAM" id="MobiDB-lite"/>
    </source>
</evidence>
<evidence type="ECO:0007744" key="6">
    <source>
    </source>
</evidence>
<reference key="1">
    <citation type="journal article" date="2004" name="Genome Res.">
        <title>The status, quality, and expansion of the NIH full-length cDNA project: the Mammalian Gene Collection (MGC).</title>
        <authorList>
            <consortium name="The MGC Project Team"/>
        </authorList>
    </citation>
    <scope>NUCLEOTIDE SEQUENCE [LARGE SCALE MRNA]</scope>
    <source>
        <tissue>Placenta</tissue>
    </source>
</reference>
<reference key="2">
    <citation type="journal article" date="2012" name="Nat. Commun.">
        <title>Quantitative maps of protein phosphorylation sites across 14 different rat organs and tissues.</title>
        <authorList>
            <person name="Lundby A."/>
            <person name="Secher A."/>
            <person name="Lage K."/>
            <person name="Nordsborg N.B."/>
            <person name="Dmytriyev A."/>
            <person name="Lundby C."/>
            <person name="Olsen J.V."/>
        </authorList>
    </citation>
    <scope>PHOSPHORYLATION [LARGE SCALE ANALYSIS] AT SER-144</scope>
    <scope>IDENTIFICATION BY MASS SPECTROMETRY [LARGE SCALE ANALYSIS]</scope>
</reference>
<accession>Q3SWU3</accession>